<organism>
    <name type="scientific">Homo sapiens</name>
    <name type="common">Human</name>
    <dbReference type="NCBI Taxonomy" id="9606"/>
    <lineage>
        <taxon>Eukaryota</taxon>
        <taxon>Metazoa</taxon>
        <taxon>Chordata</taxon>
        <taxon>Craniata</taxon>
        <taxon>Vertebrata</taxon>
        <taxon>Euteleostomi</taxon>
        <taxon>Mammalia</taxon>
        <taxon>Eutheria</taxon>
        <taxon>Euarchontoglires</taxon>
        <taxon>Primates</taxon>
        <taxon>Haplorrhini</taxon>
        <taxon>Catarrhini</taxon>
        <taxon>Hominidae</taxon>
        <taxon>Homo</taxon>
    </lineage>
</organism>
<evidence type="ECO:0000250" key="1">
    <source>
        <dbReference type="UniProtKB" id="Q7SXJ6"/>
    </source>
</evidence>
<evidence type="ECO:0000250" key="2">
    <source>
        <dbReference type="UniProtKB" id="Q9QZR0"/>
    </source>
</evidence>
<evidence type="ECO:0000255" key="3">
    <source>
        <dbReference type="PROSITE-ProRule" id="PRU00175"/>
    </source>
</evidence>
<evidence type="ECO:0000255" key="4">
    <source>
        <dbReference type="PROSITE-ProRule" id="PRU00179"/>
    </source>
</evidence>
<evidence type="ECO:0000256" key="5">
    <source>
        <dbReference type="SAM" id="MobiDB-lite"/>
    </source>
</evidence>
<evidence type="ECO:0000269" key="6">
    <source>
    </source>
</evidence>
<evidence type="ECO:0000269" key="7">
    <source>
    </source>
</evidence>
<evidence type="ECO:0000269" key="8">
    <source>
    </source>
</evidence>
<evidence type="ECO:0000269" key="9">
    <source>
    </source>
</evidence>
<evidence type="ECO:0000269" key="10">
    <source>
    </source>
</evidence>
<evidence type="ECO:0000303" key="11">
    <source>
    </source>
</evidence>
<evidence type="ECO:0000303" key="12">
    <source>
    </source>
</evidence>
<evidence type="ECO:0000305" key="13"/>
<evidence type="ECO:0000312" key="14">
    <source>
        <dbReference type="HGNC" id="HGNC:14662"/>
    </source>
</evidence>
<evidence type="ECO:0007744" key="15">
    <source>
        <dbReference type="PDB" id="5D1K"/>
    </source>
</evidence>
<evidence type="ECO:0007744" key="16">
    <source>
        <dbReference type="PDB" id="5D1L"/>
    </source>
</evidence>
<evidence type="ECO:0007744" key="17">
    <source>
        <dbReference type="PDB" id="5D1M"/>
    </source>
</evidence>
<evidence type="ECO:0007744" key="18">
    <source>
    </source>
</evidence>
<evidence type="ECO:0007744" key="19">
    <source>
    </source>
</evidence>
<evidence type="ECO:0007829" key="20">
    <source>
        <dbReference type="PDB" id="2DAY"/>
    </source>
</evidence>
<evidence type="ECO:0007829" key="21">
    <source>
        <dbReference type="PDB" id="2DMF"/>
    </source>
</evidence>
<evidence type="ECO:0007829" key="22">
    <source>
        <dbReference type="PDB" id="5D1M"/>
    </source>
</evidence>
<keyword id="KW-0002">3D-structure</keyword>
<keyword id="KW-0963">Cytoplasm</keyword>
<keyword id="KW-0479">Metal-binding</keyword>
<keyword id="KW-0597">Phosphoprotein</keyword>
<keyword id="KW-1267">Proteomics identification</keyword>
<keyword id="KW-1185">Reference proteome</keyword>
<keyword id="KW-0808">Transferase</keyword>
<keyword id="KW-0832">Ubl conjugation</keyword>
<keyword id="KW-0833">Ubl conjugation pathway</keyword>
<keyword id="KW-0862">Zinc</keyword>
<keyword id="KW-0863">Zinc-finger</keyword>
<name>RNF25_HUMAN</name>
<gene>
    <name evidence="12 14" type="primary">RNF25</name>
</gene>
<feature type="chain" id="PRO_0000056066" description="E3 ubiquitin-protein ligase RNF25">
    <location>
        <begin position="1"/>
        <end position="459"/>
    </location>
</feature>
<feature type="domain" description="RWD" evidence="4">
    <location>
        <begin position="18"/>
        <end position="128"/>
    </location>
</feature>
<feature type="zinc finger region" description="RING-type" evidence="3">
    <location>
        <begin position="135"/>
        <end position="202"/>
    </location>
</feature>
<feature type="region of interest" description="Disordered" evidence="5">
    <location>
        <begin position="268"/>
        <end position="309"/>
    </location>
</feature>
<feature type="region of interest" description="Disordered" evidence="5">
    <location>
        <begin position="322"/>
        <end position="459"/>
    </location>
</feature>
<feature type="compositionally biased region" description="Polar residues" evidence="5">
    <location>
        <begin position="282"/>
        <end position="303"/>
    </location>
</feature>
<feature type="compositionally biased region" description="Basic and acidic residues" evidence="5">
    <location>
        <begin position="349"/>
        <end position="370"/>
    </location>
</feature>
<feature type="compositionally biased region" description="Basic and acidic residues" evidence="5">
    <location>
        <begin position="378"/>
        <end position="389"/>
    </location>
</feature>
<feature type="compositionally biased region" description="Basic and acidic residues" evidence="5">
    <location>
        <begin position="413"/>
        <end position="424"/>
    </location>
</feature>
<feature type="compositionally biased region" description="Basic and acidic residues" evidence="5">
    <location>
        <begin position="446"/>
        <end position="459"/>
    </location>
</feature>
<feature type="binding site" evidence="7 15 16 17">
    <location>
        <position position="135"/>
    </location>
    <ligand>
        <name>Zn(2+)</name>
        <dbReference type="ChEBI" id="CHEBI:29105"/>
        <label>1</label>
    </ligand>
</feature>
<feature type="binding site" evidence="7 15 16 17">
    <location>
        <position position="138"/>
    </location>
    <ligand>
        <name>Zn(2+)</name>
        <dbReference type="ChEBI" id="CHEBI:29105"/>
        <label>1</label>
    </ligand>
</feature>
<feature type="binding site" evidence="7 15 16 17">
    <location>
        <position position="153"/>
    </location>
    <ligand>
        <name>Zn(2+)</name>
        <dbReference type="ChEBI" id="CHEBI:29105"/>
        <label>2</label>
    </ligand>
</feature>
<feature type="binding site" evidence="7 15 16 17">
    <location>
        <position position="155"/>
    </location>
    <ligand>
        <name>Zn(2+)</name>
        <dbReference type="ChEBI" id="CHEBI:29105"/>
        <label>2</label>
    </ligand>
</feature>
<feature type="binding site" evidence="7 15 16 17">
    <location>
        <position position="158"/>
    </location>
    <ligand>
        <name>Zn(2+)</name>
        <dbReference type="ChEBI" id="CHEBI:29105"/>
        <label>1</label>
    </ligand>
</feature>
<feature type="binding site" evidence="7 15 16 17">
    <location>
        <position position="161"/>
    </location>
    <ligand>
        <name>Zn(2+)</name>
        <dbReference type="ChEBI" id="CHEBI:29105"/>
        <label>1</label>
    </ligand>
</feature>
<feature type="binding site" evidence="7 15 16 17">
    <location>
        <position position="198"/>
    </location>
    <ligand>
        <name>Zn(2+)</name>
        <dbReference type="ChEBI" id="CHEBI:29105"/>
        <label>2</label>
    </ligand>
</feature>
<feature type="binding site" evidence="7 15 16 17">
    <location>
        <position position="201"/>
    </location>
    <ligand>
        <name>Zn(2+)</name>
        <dbReference type="ChEBI" id="CHEBI:29105"/>
        <label>2</label>
    </ligand>
</feature>
<feature type="modified residue" description="Phosphoserine" evidence="18 19">
    <location>
        <position position="450"/>
    </location>
</feature>
<feature type="mutagenesis site" description="Abolished E3 ubiquitin-protein ligase activity." evidence="9">
    <original>CVIC</original>
    <variation>SVIS</variation>
    <location>
        <begin position="135"/>
        <end position="138"/>
    </location>
</feature>
<feature type="mutagenesis site" description="Strongly reduced E3 ubiquitin-protein ligase activity, slightly reduced binding to UBE2D2." evidence="7">
    <original>I</original>
    <variation>A</variation>
    <location>
        <position position="137"/>
    </location>
</feature>
<feature type="mutagenesis site" description="Reduced activation of NF-kappa-B." evidence="6">
    <original>C</original>
    <variation>S</variation>
    <location>
        <position position="159"/>
    </location>
</feature>
<feature type="mutagenesis site" description="Strongly reduced activation of NF-kappa-B." evidence="6">
    <original>C</original>
    <variation>S</variation>
    <location>
        <position position="161"/>
    </location>
</feature>
<feature type="mutagenesis site" description="Decreased E3 ubiquitin-protein ligase activity, increased binding to UBE2D2." evidence="7">
    <original>Y</original>
    <variation>A</variation>
    <location>
        <position position="165"/>
    </location>
</feature>
<feature type="mutagenesis site" description="Decreased E3 ubiquitin-protein ligase activity without affecting binding to UBE2D2." evidence="7">
    <original>P</original>
    <variation>A</variation>
    <location>
        <position position="199"/>
    </location>
</feature>
<feature type="mutagenesis site" description="Decreased binding to UBE2D2." evidence="7">
    <original>Y</original>
    <variation>A</variation>
    <location>
        <position position="242"/>
    </location>
</feature>
<feature type="mutagenesis site" description="Decreased binding to UBE2D2." evidence="7">
    <original>Q</original>
    <variation>A</variation>
    <location>
        <position position="245"/>
    </location>
</feature>
<feature type="sequence conflict" description="In Ref. 2; BAD96245." evidence="13" ref="2">
    <original>H</original>
    <variation>R</variation>
    <location>
        <position position="186"/>
    </location>
</feature>
<feature type="sequence conflict" description="In Ref. 2; BAD96245." evidence="13" ref="2">
    <original>P</original>
    <variation>S</variation>
    <location>
        <position position="346"/>
    </location>
</feature>
<feature type="helix" evidence="20">
    <location>
        <begin position="15"/>
        <end position="26"/>
    </location>
</feature>
<feature type="turn" evidence="20">
    <location>
        <begin position="28"/>
        <end position="30"/>
    </location>
</feature>
<feature type="strand" evidence="20">
    <location>
        <begin position="31"/>
        <end position="34"/>
    </location>
</feature>
<feature type="turn" evidence="21">
    <location>
        <begin position="38"/>
        <end position="40"/>
    </location>
</feature>
<feature type="strand" evidence="20">
    <location>
        <begin position="43"/>
        <end position="49"/>
    </location>
</feature>
<feature type="strand" evidence="20">
    <location>
        <begin position="55"/>
        <end position="58"/>
    </location>
</feature>
<feature type="strand" evidence="20">
    <location>
        <begin position="63"/>
        <end position="70"/>
    </location>
</feature>
<feature type="strand" evidence="20">
    <location>
        <begin position="80"/>
        <end position="89"/>
    </location>
</feature>
<feature type="helix" evidence="20">
    <location>
        <begin position="91"/>
        <end position="107"/>
    </location>
</feature>
<feature type="turn" evidence="20">
    <location>
        <begin position="108"/>
        <end position="110"/>
    </location>
</feature>
<feature type="helix" evidence="20">
    <location>
        <begin position="114"/>
        <end position="125"/>
    </location>
</feature>
<feature type="strand" evidence="22">
    <location>
        <begin position="132"/>
        <end position="134"/>
    </location>
</feature>
<feature type="turn" evidence="22">
    <location>
        <begin position="136"/>
        <end position="138"/>
    </location>
</feature>
<feature type="strand" evidence="22">
    <location>
        <begin position="148"/>
        <end position="150"/>
    </location>
</feature>
<feature type="strand" evidence="22">
    <location>
        <begin position="156"/>
        <end position="158"/>
    </location>
</feature>
<feature type="helix" evidence="22">
    <location>
        <begin position="159"/>
        <end position="176"/>
    </location>
</feature>
<feature type="turn" evidence="22">
    <location>
        <begin position="199"/>
        <end position="201"/>
    </location>
</feature>
<feature type="helix" evidence="22">
    <location>
        <begin position="209"/>
        <end position="214"/>
    </location>
</feature>
<feature type="helix" evidence="22">
    <location>
        <begin position="229"/>
        <end position="247"/>
    </location>
</feature>
<comment type="function">
    <text evidence="2 6 8 9 10">E3 ubiquitin-protein ligase that plays a key role in the RNF14-RNF25 translation quality control pathway, a pathway that takes place when a ribosome has stalled during translation, and which promotes ubiquitination and degradation of translation factors on stalled ribosomes (PubMed:36638793, PubMed:37651229, PubMed:37951216). Catalyzes ubiquitination of RPS27A in response to ribosome collisions, promoting activation of RNF14 (PubMed:36638793). RNF25 catalyzes ubiquitination of other ribosomal proteins on stalled ribosomes, such as RPL0, RPL1, RPL12, RPS13 and RPS17 (PubMed:36638793). Also involved in ubiquitination and degradation of stalled ETF1/eRF1 (PubMed:36638793, PubMed:37651229). Independently of its function in the response to stalled ribosomes, mediates ubiquitination and subsequent proteasomal degradation of NKD2 (By similarity). May also stimulate transcription mediated by NF-kappa-B via its interaction with RELA/p65 (PubMed:12748188).</text>
</comment>
<comment type="catalytic activity">
    <reaction evidence="7 8 9">
        <text>S-ubiquitinyl-[E2 ubiquitin-conjugating enzyme]-L-cysteine + [acceptor protein]-L-lysine = [E2 ubiquitin-conjugating enzyme]-L-cysteine + N(6)-ubiquitinyl-[acceptor protein]-L-lysine.</text>
        <dbReference type="EC" id="2.3.2.27"/>
    </reaction>
</comment>
<comment type="pathway">
    <text evidence="7 8 9">Protein modification; protein ubiquitination.</text>
</comment>
<comment type="subunit">
    <text evidence="6 7">Interacts with UBE2D2, and may also interact with UBE2E1 and UBE2E3 (PubMed:26475854). Interacts with RELA/p65 (PubMed:12748188).</text>
</comment>
<comment type="interaction">
    <interactant intactId="EBI-2129220">
        <id>Q96BH1</id>
    </interactant>
    <interactant intactId="EBI-11976683">
        <id>Q4G0X4</id>
        <label>KCTD21</label>
    </interactant>
    <organismsDiffer>false</organismsDiffer>
    <experiments>3</experiments>
</comment>
<comment type="interaction">
    <interactant intactId="EBI-2129220">
        <id>Q96BH1</id>
    </interactant>
    <interactant intactId="EBI-16439278">
        <id>Q6FHY5</id>
        <label>MEOX2</label>
    </interactant>
    <organismsDiffer>false</organismsDiffer>
    <experiments>3</experiments>
</comment>
<comment type="interaction">
    <interactant intactId="EBI-2129220">
        <id>Q96BH1</id>
    </interactant>
    <interactant intactId="EBI-1538629">
        <id>Q969F2</id>
        <label>NKD2</label>
    </interactant>
    <organismsDiffer>false</organismsDiffer>
    <experiments>2</experiments>
</comment>
<comment type="interaction">
    <interactant intactId="EBI-2129220">
        <id>Q96BH1</id>
    </interactant>
    <interactant intactId="EBI-21251460">
        <id>O60260-5</id>
        <label>PRKN</label>
    </interactant>
    <organismsDiffer>false</organismsDiffer>
    <experiments>3</experiments>
</comment>
<comment type="interaction">
    <interactant intactId="EBI-2129220">
        <id>Q96BH1</id>
    </interactant>
    <interactant intactId="EBI-743540">
        <id>P51668</id>
        <label>UBE2D1</label>
    </interactant>
    <organismsDiffer>false</organismsDiffer>
    <experiments>6</experiments>
</comment>
<comment type="interaction">
    <interactant intactId="EBI-2129220">
        <id>Q96BH1</id>
    </interactant>
    <interactant intactId="EBI-347677">
        <id>P62837</id>
        <label>UBE2D2</label>
    </interactant>
    <organismsDiffer>false</organismsDiffer>
    <experiments>5</experiments>
</comment>
<comment type="interaction">
    <interactant intactId="EBI-2129220">
        <id>Q96BH1</id>
    </interactant>
    <interactant intactId="EBI-348268">
        <id>P61077</id>
        <label>UBE2D3</label>
    </interactant>
    <organismsDiffer>false</organismsDiffer>
    <experiments>8</experiments>
</comment>
<comment type="interaction">
    <interactant intactId="EBI-2129220">
        <id>Q96BH1</id>
    </interactant>
    <interactant intactId="EBI-745527">
        <id>Q9Y2X8</id>
        <label>UBE2D4</label>
    </interactant>
    <organismsDiffer>false</organismsDiffer>
    <experiments>6</experiments>
</comment>
<comment type="interaction">
    <interactant intactId="EBI-2129220">
        <id>Q96BH1</id>
    </interactant>
    <interactant intactId="EBI-348546">
        <id>P51965</id>
        <label>UBE2E1</label>
    </interactant>
    <organismsDiffer>false</organismsDiffer>
    <experiments>6</experiments>
</comment>
<comment type="interaction">
    <interactant intactId="EBI-2129220">
        <id>Q96BH1</id>
    </interactant>
    <interactant intactId="EBI-2129763">
        <id>Q96LR5</id>
        <label>UBE2E2</label>
    </interactant>
    <organismsDiffer>false</organismsDiffer>
    <experiments>4</experiments>
</comment>
<comment type="interaction">
    <interactant intactId="EBI-2129220">
        <id>Q96BH1</id>
    </interactant>
    <interactant intactId="EBI-348496">
        <id>Q969T4</id>
        <label>UBE2E3</label>
    </interactant>
    <organismsDiffer>false</organismsDiffer>
    <experiments>7</experiments>
</comment>
<comment type="subcellular location">
    <subcellularLocation>
        <location evidence="1">Cytoplasm</location>
    </subcellularLocation>
</comment>
<comment type="PTM">
    <text evidence="7">Ubiquitinated; autoubiquitinated.</text>
</comment>
<comment type="similarity">
    <text evidence="13">Belongs to the RNF25 family.</text>
</comment>
<protein>
    <recommendedName>
        <fullName evidence="13">E3 ubiquitin-protein ligase RNF25</fullName>
        <ecNumber evidence="7 8 9">2.3.2.27</ecNumber>
    </recommendedName>
    <alternativeName>
        <fullName evidence="13">RING finger protein 25</fullName>
    </alternativeName>
    <alternativeName>
        <fullName evidence="11">RING finger protein AO7</fullName>
    </alternativeName>
</protein>
<dbReference type="EC" id="2.3.2.27" evidence="7 8 9"/>
<dbReference type="EMBL" id="AK023968">
    <property type="protein sequence ID" value="BAB14743.1"/>
    <property type="molecule type" value="mRNA"/>
</dbReference>
<dbReference type="EMBL" id="AK289501">
    <property type="protein sequence ID" value="BAF82190.1"/>
    <property type="molecule type" value="mRNA"/>
</dbReference>
<dbReference type="EMBL" id="AK222525">
    <property type="protein sequence ID" value="BAD96245.1"/>
    <property type="molecule type" value="mRNA"/>
</dbReference>
<dbReference type="EMBL" id="AC009974">
    <property type="status" value="NOT_ANNOTATED_CDS"/>
    <property type="molecule type" value="Genomic_DNA"/>
</dbReference>
<dbReference type="EMBL" id="CH471063">
    <property type="protein sequence ID" value="EAW70645.1"/>
    <property type="molecule type" value="Genomic_DNA"/>
</dbReference>
<dbReference type="EMBL" id="BC015612">
    <property type="protein sequence ID" value="AAH15612.1"/>
    <property type="molecule type" value="mRNA"/>
</dbReference>
<dbReference type="CCDS" id="CCDS2420.1"/>
<dbReference type="RefSeq" id="NP_071898.2">
    <property type="nucleotide sequence ID" value="NM_022453.2"/>
</dbReference>
<dbReference type="PDB" id="2DAY">
    <property type="method" value="NMR"/>
    <property type="chains" value="A=11-125"/>
</dbReference>
<dbReference type="PDB" id="2DMF">
    <property type="method" value="NMR"/>
    <property type="chains" value="A=11-134"/>
</dbReference>
<dbReference type="PDB" id="5D1K">
    <property type="method" value="X-ray"/>
    <property type="resolution" value="1.78 A"/>
    <property type="chains" value="B=126-258"/>
</dbReference>
<dbReference type="PDB" id="5D1L">
    <property type="method" value="X-ray"/>
    <property type="resolution" value="1.62 A"/>
    <property type="chains" value="B=126-258"/>
</dbReference>
<dbReference type="PDB" id="5D1M">
    <property type="method" value="X-ray"/>
    <property type="resolution" value="1.58 A"/>
    <property type="chains" value="B=126-258"/>
</dbReference>
<dbReference type="PDBsum" id="2DAY"/>
<dbReference type="PDBsum" id="2DMF"/>
<dbReference type="PDBsum" id="5D1K"/>
<dbReference type="PDBsum" id="5D1L"/>
<dbReference type="PDBsum" id="5D1M"/>
<dbReference type="BMRB" id="Q96BH1"/>
<dbReference type="SMR" id="Q96BH1"/>
<dbReference type="BioGRID" id="122133">
    <property type="interactions" value="48"/>
</dbReference>
<dbReference type="DIP" id="DIP-29063N"/>
<dbReference type="FunCoup" id="Q96BH1">
    <property type="interactions" value="3120"/>
</dbReference>
<dbReference type="IntAct" id="Q96BH1">
    <property type="interactions" value="32"/>
</dbReference>
<dbReference type="STRING" id="9606.ENSP00000295704"/>
<dbReference type="GlyGen" id="Q96BH1">
    <property type="glycosylation" value="1 site, 1 O-linked glycan (1 site)"/>
</dbReference>
<dbReference type="iPTMnet" id="Q96BH1"/>
<dbReference type="PhosphoSitePlus" id="Q96BH1"/>
<dbReference type="BioMuta" id="RNF25"/>
<dbReference type="DMDM" id="21362899"/>
<dbReference type="jPOST" id="Q96BH1"/>
<dbReference type="MassIVE" id="Q96BH1"/>
<dbReference type="PaxDb" id="9606-ENSP00000295704"/>
<dbReference type="PeptideAtlas" id="Q96BH1"/>
<dbReference type="ProteomicsDB" id="76075"/>
<dbReference type="Pumba" id="Q96BH1"/>
<dbReference type="Antibodypedia" id="34282">
    <property type="antibodies" value="151 antibodies from 27 providers"/>
</dbReference>
<dbReference type="DNASU" id="64320"/>
<dbReference type="Ensembl" id="ENST00000295704.7">
    <property type="protein sequence ID" value="ENSP00000295704.2"/>
    <property type="gene ID" value="ENSG00000163481.8"/>
</dbReference>
<dbReference type="GeneID" id="64320"/>
<dbReference type="KEGG" id="hsa:64320"/>
<dbReference type="MANE-Select" id="ENST00000295704.7">
    <property type="protein sequence ID" value="ENSP00000295704.2"/>
    <property type="RefSeq nucleotide sequence ID" value="NM_022453.3"/>
    <property type="RefSeq protein sequence ID" value="NP_071898.2"/>
</dbReference>
<dbReference type="UCSC" id="uc002vit.4">
    <property type="organism name" value="human"/>
</dbReference>
<dbReference type="AGR" id="HGNC:14662"/>
<dbReference type="CTD" id="64320"/>
<dbReference type="DisGeNET" id="64320"/>
<dbReference type="GeneCards" id="RNF25"/>
<dbReference type="HGNC" id="HGNC:14662">
    <property type="gene designation" value="RNF25"/>
</dbReference>
<dbReference type="HPA" id="ENSG00000163481">
    <property type="expression patterns" value="Low tissue specificity"/>
</dbReference>
<dbReference type="MIM" id="616014">
    <property type="type" value="gene"/>
</dbReference>
<dbReference type="neXtProt" id="NX_Q96BH1"/>
<dbReference type="OpenTargets" id="ENSG00000163481"/>
<dbReference type="PharmGKB" id="PA34429"/>
<dbReference type="VEuPathDB" id="HostDB:ENSG00000163481"/>
<dbReference type="eggNOG" id="KOG4445">
    <property type="taxonomic scope" value="Eukaryota"/>
</dbReference>
<dbReference type="GeneTree" id="ENSGT00390000001557"/>
<dbReference type="HOGENOM" id="CLU_051859_0_0_1"/>
<dbReference type="InParanoid" id="Q96BH1"/>
<dbReference type="OMA" id="WEPWEIS"/>
<dbReference type="OrthoDB" id="432311at2759"/>
<dbReference type="PAN-GO" id="Q96BH1">
    <property type="GO annotations" value="4 GO annotations based on evolutionary models"/>
</dbReference>
<dbReference type="PhylomeDB" id="Q96BH1"/>
<dbReference type="TreeFam" id="TF324097"/>
<dbReference type="BRENDA" id="2.3.2.27">
    <property type="organism ID" value="2681"/>
</dbReference>
<dbReference type="PathwayCommons" id="Q96BH1"/>
<dbReference type="Reactome" id="R-HSA-983168">
    <property type="pathway name" value="Antigen processing: Ubiquitination &amp; Proteasome degradation"/>
</dbReference>
<dbReference type="SignaLink" id="Q96BH1"/>
<dbReference type="SIGNOR" id="Q96BH1"/>
<dbReference type="UniPathway" id="UPA00143"/>
<dbReference type="BioGRID-ORCS" id="64320">
    <property type="hits" value="73 hits in 1200 CRISPR screens"/>
</dbReference>
<dbReference type="CD-CODE" id="DEE660B4">
    <property type="entry name" value="Stress granule"/>
</dbReference>
<dbReference type="ChiTaRS" id="RNF25">
    <property type="organism name" value="human"/>
</dbReference>
<dbReference type="EvolutionaryTrace" id="Q96BH1"/>
<dbReference type="GeneWiki" id="RNF25"/>
<dbReference type="GenomeRNAi" id="64320"/>
<dbReference type="Pharos" id="Q96BH1">
    <property type="development level" value="Tbio"/>
</dbReference>
<dbReference type="PRO" id="PR:Q96BH1"/>
<dbReference type="Proteomes" id="UP000005640">
    <property type="component" value="Chromosome 2"/>
</dbReference>
<dbReference type="RNAct" id="Q96BH1">
    <property type="molecule type" value="protein"/>
</dbReference>
<dbReference type="Bgee" id="ENSG00000163481">
    <property type="expression patterns" value="Expressed in adenohypophysis and 149 other cell types or tissues"/>
</dbReference>
<dbReference type="ExpressionAtlas" id="Q96BH1">
    <property type="expression patterns" value="baseline and differential"/>
</dbReference>
<dbReference type="GO" id="GO:0005829">
    <property type="term" value="C:cytosol"/>
    <property type="evidence" value="ECO:0000314"/>
    <property type="project" value="UniProtKB"/>
</dbReference>
<dbReference type="GO" id="GO:0022626">
    <property type="term" value="C:cytosolic ribosome"/>
    <property type="evidence" value="ECO:0000314"/>
    <property type="project" value="UniProt"/>
</dbReference>
<dbReference type="GO" id="GO:0005634">
    <property type="term" value="C:nucleus"/>
    <property type="evidence" value="ECO:0000314"/>
    <property type="project" value="UniProtKB"/>
</dbReference>
<dbReference type="GO" id="GO:0051059">
    <property type="term" value="F:NF-kappaB binding"/>
    <property type="evidence" value="ECO:0000353"/>
    <property type="project" value="UniProtKB"/>
</dbReference>
<dbReference type="GO" id="GO:0061630">
    <property type="term" value="F:ubiquitin protein ligase activity"/>
    <property type="evidence" value="ECO:0000314"/>
    <property type="project" value="UniProtKB"/>
</dbReference>
<dbReference type="GO" id="GO:0004842">
    <property type="term" value="F:ubiquitin-protein transferase activity"/>
    <property type="evidence" value="ECO:0000250"/>
    <property type="project" value="UniProtKB"/>
</dbReference>
<dbReference type="GO" id="GO:0008270">
    <property type="term" value="F:zinc ion binding"/>
    <property type="evidence" value="ECO:0007669"/>
    <property type="project" value="UniProtKB-KW"/>
</dbReference>
<dbReference type="GO" id="GO:0051092">
    <property type="term" value="P:positive regulation of NF-kappaB transcription factor activity"/>
    <property type="evidence" value="ECO:0000314"/>
    <property type="project" value="UniProtKB"/>
</dbReference>
<dbReference type="GO" id="GO:0085020">
    <property type="term" value="P:protein K6-linked ubiquitination"/>
    <property type="evidence" value="ECO:0000314"/>
    <property type="project" value="UniProt"/>
</dbReference>
<dbReference type="GO" id="GO:0016567">
    <property type="term" value="P:protein ubiquitination"/>
    <property type="evidence" value="ECO:0000250"/>
    <property type="project" value="UniProtKB"/>
</dbReference>
<dbReference type="GO" id="GO:0160127">
    <property type="term" value="P:protein-RNA covalent cross-linking repair"/>
    <property type="evidence" value="ECO:0000314"/>
    <property type="project" value="UniProt"/>
</dbReference>
<dbReference type="GO" id="GO:0072344">
    <property type="term" value="P:rescue of stalled ribosome"/>
    <property type="evidence" value="ECO:0000314"/>
    <property type="project" value="UniProtKB"/>
</dbReference>
<dbReference type="GO" id="GO:0006511">
    <property type="term" value="P:ubiquitin-dependent protein catabolic process"/>
    <property type="evidence" value="ECO:0000314"/>
    <property type="project" value="UniProt"/>
</dbReference>
<dbReference type="CDD" id="cd16470">
    <property type="entry name" value="RING-H2_RNF25"/>
    <property type="match status" value="1"/>
</dbReference>
<dbReference type="CDD" id="cd23818">
    <property type="entry name" value="RWD_RNF25"/>
    <property type="match status" value="1"/>
</dbReference>
<dbReference type="FunFam" id="3.30.40.10:FF:000215">
    <property type="entry name" value="E3 ubiquitin-protein ligase RNF25"/>
    <property type="match status" value="1"/>
</dbReference>
<dbReference type="FunFam" id="3.10.110.10:FF:000052">
    <property type="entry name" value="Putative e3 ubiquitin-protein ligase rnf25"/>
    <property type="match status" value="1"/>
</dbReference>
<dbReference type="Gene3D" id="3.10.110.10">
    <property type="entry name" value="Ubiquitin Conjugating Enzyme"/>
    <property type="match status" value="1"/>
</dbReference>
<dbReference type="Gene3D" id="3.30.40.10">
    <property type="entry name" value="Zinc/RING finger domain, C3HC4 (zinc finger)"/>
    <property type="match status" value="1"/>
</dbReference>
<dbReference type="InterPro" id="IPR039133">
    <property type="entry name" value="RNF25"/>
</dbReference>
<dbReference type="InterPro" id="IPR006575">
    <property type="entry name" value="RWD_dom"/>
</dbReference>
<dbReference type="InterPro" id="IPR016135">
    <property type="entry name" value="UBQ-conjugating_enzyme/RWD"/>
</dbReference>
<dbReference type="InterPro" id="IPR001841">
    <property type="entry name" value="Znf_RING"/>
</dbReference>
<dbReference type="InterPro" id="IPR013083">
    <property type="entry name" value="Znf_RING/FYVE/PHD"/>
</dbReference>
<dbReference type="PANTHER" id="PTHR13198:SF4">
    <property type="entry name" value="E3 UBIQUITIN-PROTEIN LIGASE RNF25"/>
    <property type="match status" value="1"/>
</dbReference>
<dbReference type="PANTHER" id="PTHR13198">
    <property type="entry name" value="RING FINGER PROTEIN 25"/>
    <property type="match status" value="1"/>
</dbReference>
<dbReference type="Pfam" id="PF05773">
    <property type="entry name" value="RWD"/>
    <property type="match status" value="1"/>
</dbReference>
<dbReference type="Pfam" id="PF13639">
    <property type="entry name" value="zf-RING_2"/>
    <property type="match status" value="1"/>
</dbReference>
<dbReference type="SMART" id="SM00184">
    <property type="entry name" value="RING"/>
    <property type="match status" value="1"/>
</dbReference>
<dbReference type="SMART" id="SM00591">
    <property type="entry name" value="RWD"/>
    <property type="match status" value="1"/>
</dbReference>
<dbReference type="SUPFAM" id="SSF57850">
    <property type="entry name" value="RING/U-box"/>
    <property type="match status" value="1"/>
</dbReference>
<dbReference type="SUPFAM" id="SSF54495">
    <property type="entry name" value="UBC-like"/>
    <property type="match status" value="1"/>
</dbReference>
<dbReference type="PROSITE" id="PS50908">
    <property type="entry name" value="RWD"/>
    <property type="match status" value="1"/>
</dbReference>
<dbReference type="PROSITE" id="PS50089">
    <property type="entry name" value="ZF_RING_2"/>
    <property type="match status" value="1"/>
</dbReference>
<proteinExistence type="evidence at protein level"/>
<reference key="1">
    <citation type="journal article" date="2004" name="Nat. Genet.">
        <title>Complete sequencing and characterization of 21,243 full-length human cDNAs.</title>
        <authorList>
            <person name="Ota T."/>
            <person name="Suzuki Y."/>
            <person name="Nishikawa T."/>
            <person name="Otsuki T."/>
            <person name="Sugiyama T."/>
            <person name="Irie R."/>
            <person name="Wakamatsu A."/>
            <person name="Hayashi K."/>
            <person name="Sato H."/>
            <person name="Nagai K."/>
            <person name="Kimura K."/>
            <person name="Makita H."/>
            <person name="Sekine M."/>
            <person name="Obayashi M."/>
            <person name="Nishi T."/>
            <person name="Shibahara T."/>
            <person name="Tanaka T."/>
            <person name="Ishii S."/>
            <person name="Yamamoto J."/>
            <person name="Saito K."/>
            <person name="Kawai Y."/>
            <person name="Isono Y."/>
            <person name="Nakamura Y."/>
            <person name="Nagahari K."/>
            <person name="Murakami K."/>
            <person name="Yasuda T."/>
            <person name="Iwayanagi T."/>
            <person name="Wagatsuma M."/>
            <person name="Shiratori A."/>
            <person name="Sudo H."/>
            <person name="Hosoiri T."/>
            <person name="Kaku Y."/>
            <person name="Kodaira H."/>
            <person name="Kondo H."/>
            <person name="Sugawara M."/>
            <person name="Takahashi M."/>
            <person name="Kanda K."/>
            <person name="Yokoi T."/>
            <person name="Furuya T."/>
            <person name="Kikkawa E."/>
            <person name="Omura Y."/>
            <person name="Abe K."/>
            <person name="Kamihara K."/>
            <person name="Katsuta N."/>
            <person name="Sato K."/>
            <person name="Tanikawa M."/>
            <person name="Yamazaki M."/>
            <person name="Ninomiya K."/>
            <person name="Ishibashi T."/>
            <person name="Yamashita H."/>
            <person name="Murakawa K."/>
            <person name="Fujimori K."/>
            <person name="Tanai H."/>
            <person name="Kimata M."/>
            <person name="Watanabe M."/>
            <person name="Hiraoka S."/>
            <person name="Chiba Y."/>
            <person name="Ishida S."/>
            <person name="Ono Y."/>
            <person name="Takiguchi S."/>
            <person name="Watanabe S."/>
            <person name="Yosida M."/>
            <person name="Hotuta T."/>
            <person name="Kusano J."/>
            <person name="Kanehori K."/>
            <person name="Takahashi-Fujii A."/>
            <person name="Hara H."/>
            <person name="Tanase T.-O."/>
            <person name="Nomura Y."/>
            <person name="Togiya S."/>
            <person name="Komai F."/>
            <person name="Hara R."/>
            <person name="Takeuchi K."/>
            <person name="Arita M."/>
            <person name="Imose N."/>
            <person name="Musashino K."/>
            <person name="Yuuki H."/>
            <person name="Oshima A."/>
            <person name="Sasaki N."/>
            <person name="Aotsuka S."/>
            <person name="Yoshikawa Y."/>
            <person name="Matsunawa H."/>
            <person name="Ichihara T."/>
            <person name="Shiohata N."/>
            <person name="Sano S."/>
            <person name="Moriya S."/>
            <person name="Momiyama H."/>
            <person name="Satoh N."/>
            <person name="Takami S."/>
            <person name="Terashima Y."/>
            <person name="Suzuki O."/>
            <person name="Nakagawa S."/>
            <person name="Senoh A."/>
            <person name="Mizoguchi H."/>
            <person name="Goto Y."/>
            <person name="Shimizu F."/>
            <person name="Wakebe H."/>
            <person name="Hishigaki H."/>
            <person name="Watanabe T."/>
            <person name="Sugiyama A."/>
            <person name="Takemoto M."/>
            <person name="Kawakami B."/>
            <person name="Yamazaki M."/>
            <person name="Watanabe K."/>
            <person name="Kumagai A."/>
            <person name="Itakura S."/>
            <person name="Fukuzumi Y."/>
            <person name="Fujimori Y."/>
            <person name="Komiyama M."/>
            <person name="Tashiro H."/>
            <person name="Tanigami A."/>
            <person name="Fujiwara T."/>
            <person name="Ono T."/>
            <person name="Yamada K."/>
            <person name="Fujii Y."/>
            <person name="Ozaki K."/>
            <person name="Hirao M."/>
            <person name="Ohmori Y."/>
            <person name="Kawabata A."/>
            <person name="Hikiji T."/>
            <person name="Kobatake N."/>
            <person name="Inagaki H."/>
            <person name="Ikema Y."/>
            <person name="Okamoto S."/>
            <person name="Okitani R."/>
            <person name="Kawakami T."/>
            <person name="Noguchi S."/>
            <person name="Itoh T."/>
            <person name="Shigeta K."/>
            <person name="Senba T."/>
            <person name="Matsumura K."/>
            <person name="Nakajima Y."/>
            <person name="Mizuno T."/>
            <person name="Morinaga M."/>
            <person name="Sasaki M."/>
            <person name="Togashi T."/>
            <person name="Oyama M."/>
            <person name="Hata H."/>
            <person name="Watanabe M."/>
            <person name="Komatsu T."/>
            <person name="Mizushima-Sugano J."/>
            <person name="Satoh T."/>
            <person name="Shirai Y."/>
            <person name="Takahashi Y."/>
            <person name="Nakagawa K."/>
            <person name="Okumura K."/>
            <person name="Nagase T."/>
            <person name="Nomura N."/>
            <person name="Kikuchi H."/>
            <person name="Masuho Y."/>
            <person name="Yamashita R."/>
            <person name="Nakai K."/>
            <person name="Yada T."/>
            <person name="Nakamura Y."/>
            <person name="Ohara O."/>
            <person name="Isogai T."/>
            <person name="Sugano S."/>
        </authorList>
    </citation>
    <scope>NUCLEOTIDE SEQUENCE [LARGE SCALE MRNA]</scope>
    <source>
        <tissue>Cerebellum</tissue>
    </source>
</reference>
<reference key="2">
    <citation type="submission" date="2005-04" db="EMBL/GenBank/DDBJ databases">
        <authorList>
            <person name="Suzuki Y."/>
            <person name="Sugano S."/>
            <person name="Totoki Y."/>
            <person name="Toyoda A."/>
            <person name="Takeda T."/>
            <person name="Sakaki Y."/>
            <person name="Tanaka A."/>
            <person name="Yokoyama S."/>
        </authorList>
    </citation>
    <scope>NUCLEOTIDE SEQUENCE [LARGE SCALE MRNA]</scope>
    <source>
        <tissue>Adipose tissue</tissue>
    </source>
</reference>
<reference key="3">
    <citation type="journal article" date="2005" name="Nature">
        <title>Generation and annotation of the DNA sequences of human chromosomes 2 and 4.</title>
        <authorList>
            <person name="Hillier L.W."/>
            <person name="Graves T.A."/>
            <person name="Fulton R.S."/>
            <person name="Fulton L.A."/>
            <person name="Pepin K.H."/>
            <person name="Minx P."/>
            <person name="Wagner-McPherson C."/>
            <person name="Layman D."/>
            <person name="Wylie K."/>
            <person name="Sekhon M."/>
            <person name="Becker M.C."/>
            <person name="Fewell G.A."/>
            <person name="Delehaunty K.D."/>
            <person name="Miner T.L."/>
            <person name="Nash W.E."/>
            <person name="Kremitzki C."/>
            <person name="Oddy L."/>
            <person name="Du H."/>
            <person name="Sun H."/>
            <person name="Bradshaw-Cordum H."/>
            <person name="Ali J."/>
            <person name="Carter J."/>
            <person name="Cordes M."/>
            <person name="Harris A."/>
            <person name="Isak A."/>
            <person name="van Brunt A."/>
            <person name="Nguyen C."/>
            <person name="Du F."/>
            <person name="Courtney L."/>
            <person name="Kalicki J."/>
            <person name="Ozersky P."/>
            <person name="Abbott S."/>
            <person name="Armstrong J."/>
            <person name="Belter E.A."/>
            <person name="Caruso L."/>
            <person name="Cedroni M."/>
            <person name="Cotton M."/>
            <person name="Davidson T."/>
            <person name="Desai A."/>
            <person name="Elliott G."/>
            <person name="Erb T."/>
            <person name="Fronick C."/>
            <person name="Gaige T."/>
            <person name="Haakenson W."/>
            <person name="Haglund K."/>
            <person name="Holmes A."/>
            <person name="Harkins R."/>
            <person name="Kim K."/>
            <person name="Kruchowski S.S."/>
            <person name="Strong C.M."/>
            <person name="Grewal N."/>
            <person name="Goyea E."/>
            <person name="Hou S."/>
            <person name="Levy A."/>
            <person name="Martinka S."/>
            <person name="Mead K."/>
            <person name="McLellan M.D."/>
            <person name="Meyer R."/>
            <person name="Randall-Maher J."/>
            <person name="Tomlinson C."/>
            <person name="Dauphin-Kohlberg S."/>
            <person name="Kozlowicz-Reilly A."/>
            <person name="Shah N."/>
            <person name="Swearengen-Shahid S."/>
            <person name="Snider J."/>
            <person name="Strong J.T."/>
            <person name="Thompson J."/>
            <person name="Yoakum M."/>
            <person name="Leonard S."/>
            <person name="Pearman C."/>
            <person name="Trani L."/>
            <person name="Radionenko M."/>
            <person name="Waligorski J.E."/>
            <person name="Wang C."/>
            <person name="Rock S.M."/>
            <person name="Tin-Wollam A.-M."/>
            <person name="Maupin R."/>
            <person name="Latreille P."/>
            <person name="Wendl M.C."/>
            <person name="Yang S.-P."/>
            <person name="Pohl C."/>
            <person name="Wallis J.W."/>
            <person name="Spieth J."/>
            <person name="Bieri T.A."/>
            <person name="Berkowicz N."/>
            <person name="Nelson J.O."/>
            <person name="Osborne J."/>
            <person name="Ding L."/>
            <person name="Meyer R."/>
            <person name="Sabo A."/>
            <person name="Shotland Y."/>
            <person name="Sinha P."/>
            <person name="Wohldmann P.E."/>
            <person name="Cook L.L."/>
            <person name="Hickenbotham M.T."/>
            <person name="Eldred J."/>
            <person name="Williams D."/>
            <person name="Jones T.A."/>
            <person name="She X."/>
            <person name="Ciccarelli F.D."/>
            <person name="Izaurralde E."/>
            <person name="Taylor J."/>
            <person name="Schmutz J."/>
            <person name="Myers R.M."/>
            <person name="Cox D.R."/>
            <person name="Huang X."/>
            <person name="McPherson J.D."/>
            <person name="Mardis E.R."/>
            <person name="Clifton S.W."/>
            <person name="Warren W.C."/>
            <person name="Chinwalla A.T."/>
            <person name="Eddy S.R."/>
            <person name="Marra M.A."/>
            <person name="Ovcharenko I."/>
            <person name="Furey T.S."/>
            <person name="Miller W."/>
            <person name="Eichler E.E."/>
            <person name="Bork P."/>
            <person name="Suyama M."/>
            <person name="Torrents D."/>
            <person name="Waterston R.H."/>
            <person name="Wilson R.K."/>
        </authorList>
    </citation>
    <scope>NUCLEOTIDE SEQUENCE [LARGE SCALE GENOMIC DNA]</scope>
</reference>
<reference key="4">
    <citation type="submission" date="2005-07" db="EMBL/GenBank/DDBJ databases">
        <authorList>
            <person name="Mural R.J."/>
            <person name="Istrail S."/>
            <person name="Sutton G.G."/>
            <person name="Florea L."/>
            <person name="Halpern A.L."/>
            <person name="Mobarry C.M."/>
            <person name="Lippert R."/>
            <person name="Walenz B."/>
            <person name="Shatkay H."/>
            <person name="Dew I."/>
            <person name="Miller J.R."/>
            <person name="Flanigan M.J."/>
            <person name="Edwards N.J."/>
            <person name="Bolanos R."/>
            <person name="Fasulo D."/>
            <person name="Halldorsson B.V."/>
            <person name="Hannenhalli S."/>
            <person name="Turner R."/>
            <person name="Yooseph S."/>
            <person name="Lu F."/>
            <person name="Nusskern D.R."/>
            <person name="Shue B.C."/>
            <person name="Zheng X.H."/>
            <person name="Zhong F."/>
            <person name="Delcher A.L."/>
            <person name="Huson D.H."/>
            <person name="Kravitz S.A."/>
            <person name="Mouchard L."/>
            <person name="Reinert K."/>
            <person name="Remington K.A."/>
            <person name="Clark A.G."/>
            <person name="Waterman M.S."/>
            <person name="Eichler E.E."/>
            <person name="Adams M.D."/>
            <person name="Hunkapiller M.W."/>
            <person name="Myers E.W."/>
            <person name="Venter J.C."/>
        </authorList>
    </citation>
    <scope>NUCLEOTIDE SEQUENCE [LARGE SCALE GENOMIC DNA]</scope>
</reference>
<reference key="5">
    <citation type="journal article" date="2004" name="Genome Res.">
        <title>The status, quality, and expansion of the NIH full-length cDNA project: the Mammalian Gene Collection (MGC).</title>
        <authorList>
            <consortium name="The MGC Project Team"/>
        </authorList>
    </citation>
    <scope>NUCLEOTIDE SEQUENCE [LARGE SCALE MRNA]</scope>
    <source>
        <tissue>Placenta</tissue>
    </source>
</reference>
<reference key="6">
    <citation type="journal article" date="2003" name="J. Biol. Chem.">
        <title>RING finger protein AO7 supports NF-kappaB-mediated transcription by interacting with the transactivation domain of the p65 subunit.</title>
        <authorList>
            <person name="Asamitsu K."/>
            <person name="Tetsuka T."/>
            <person name="Kanazawa S."/>
            <person name="Okamoto T."/>
        </authorList>
    </citation>
    <scope>FUNCTION</scope>
    <scope>SUBCELLULAR LOCATION</scope>
    <scope>INTERACTION WITH RELA</scope>
    <scope>MUTAGENESIS OF CYS-159 AND CYS-161</scope>
</reference>
<reference key="7">
    <citation type="journal article" date="2010" name="Sci. Signal.">
        <title>Quantitative phosphoproteomics reveals widespread full phosphorylation site occupancy during mitosis.</title>
        <authorList>
            <person name="Olsen J.V."/>
            <person name="Vermeulen M."/>
            <person name="Santamaria A."/>
            <person name="Kumar C."/>
            <person name="Miller M.L."/>
            <person name="Jensen L.J."/>
            <person name="Gnad F."/>
            <person name="Cox J."/>
            <person name="Jensen T.S."/>
            <person name="Nigg E.A."/>
            <person name="Brunak S."/>
            <person name="Mann M."/>
        </authorList>
    </citation>
    <scope>PHOSPHORYLATION [LARGE SCALE ANALYSIS] AT SER-450</scope>
    <scope>IDENTIFICATION BY MASS SPECTROMETRY [LARGE SCALE ANALYSIS]</scope>
    <source>
        <tissue>Cervix carcinoma</tissue>
    </source>
</reference>
<reference key="8">
    <citation type="journal article" date="2011" name="BMC Syst. Biol.">
        <title>Initial characterization of the human central proteome.</title>
        <authorList>
            <person name="Burkard T.R."/>
            <person name="Planyavsky M."/>
            <person name="Kaupe I."/>
            <person name="Breitwieser F.P."/>
            <person name="Buerckstuemmer T."/>
            <person name="Bennett K.L."/>
            <person name="Superti-Furga G."/>
            <person name="Colinge J."/>
        </authorList>
    </citation>
    <scope>IDENTIFICATION BY MASS SPECTROMETRY [LARGE SCALE ANALYSIS]</scope>
</reference>
<reference key="9">
    <citation type="journal article" date="2013" name="J. Proteome Res.">
        <title>Toward a comprehensive characterization of a human cancer cell phosphoproteome.</title>
        <authorList>
            <person name="Zhou H."/>
            <person name="Di Palma S."/>
            <person name="Preisinger C."/>
            <person name="Peng M."/>
            <person name="Polat A.N."/>
            <person name="Heck A.J."/>
            <person name="Mohammed S."/>
        </authorList>
    </citation>
    <scope>PHOSPHORYLATION [LARGE SCALE ANALYSIS] AT SER-450</scope>
    <scope>IDENTIFICATION BY MASS SPECTROMETRY [LARGE SCALE ANALYSIS]</scope>
    <source>
        <tissue>Cervix carcinoma</tissue>
    </source>
</reference>
<reference key="10">
    <citation type="submission" date="2006-10" db="PDB data bank">
        <title>An extended conformation of the RWD domain of human RING finger protein 25.</title>
        <authorList>
            <consortium name="RIKEN structural genomics initiative (RSGI)"/>
        </authorList>
    </citation>
    <scope>STRUCTURE BY NMR OF 10-134</scope>
</reference>
<reference key="11">
    <citation type="journal article" date="2023" name="Cell">
        <title>An E3 ligase network engages GCN1 to promote the degradation of translation factors on stalled ribosomes.</title>
        <authorList>
            <person name="Oltion K."/>
            <person name="Carelli J.D."/>
            <person name="Yang T."/>
            <person name="See S.K."/>
            <person name="Wang H.Y."/>
            <person name="Kampmann M."/>
            <person name="Taunton J."/>
        </authorList>
    </citation>
    <scope>FUNCTION</scope>
    <scope>CATALYTIC ACTIVITY</scope>
    <scope>PATHWAY</scope>
</reference>
<reference key="12">
    <citation type="journal article" date="2023" name="Cell Rep.">
        <title>Drug-induced eRF1 degradation promotes readthrough and reveals a new branch of ribosome quality control.</title>
        <authorList>
            <person name="Gurzeler L.A."/>
            <person name="Link M."/>
            <person name="Ibig Y."/>
            <person name="Schmidt I."/>
            <person name="Galuba O."/>
            <person name="Schoenbett J."/>
            <person name="Gasser-Didierlaurant C."/>
            <person name="Parker C.N."/>
            <person name="Mao X."/>
            <person name="Bitsch F."/>
            <person name="Schirle M."/>
            <person name="Couttet P."/>
            <person name="Sigoillot F."/>
            <person name="Ziegelmueller J."/>
            <person name="Uldry A.C."/>
            <person name="Teodorowicz W."/>
            <person name="Schmiedeberg N."/>
            <person name="Muehlemann O."/>
            <person name="Reinhardt J."/>
        </authorList>
    </citation>
    <scope>FUNCTION</scope>
    <scope>CATALYTIC ACTIVITY</scope>
    <scope>PATHWAY</scope>
    <scope>MUTAGENESIS OF 135-CYS--CYS-138</scope>
</reference>
<reference key="13">
    <citation type="journal article" date="2023" name="Mol. Cell">
        <title>RNF14-dependent atypical ubiquitylation promotes translation-coupled resolution of RNA-protein crosslinks.</title>
        <authorList>
            <person name="Zhao S."/>
            <person name="Cordes J."/>
            <person name="Caban K.M."/>
            <person name="Goetz M.J."/>
            <person name="Mackens-Kiani T."/>
            <person name="Veltri A.J."/>
            <person name="Sinha N.K."/>
            <person name="Weickert P."/>
            <person name="Kaya S."/>
            <person name="Hewitt G."/>
            <person name="Nedialkova D.D."/>
            <person name="Froehlich T."/>
            <person name="Beckmann R."/>
            <person name="Buskirk A.R."/>
            <person name="Green R."/>
            <person name="Stingele J."/>
        </authorList>
    </citation>
    <scope>FUNCTION</scope>
</reference>
<reference evidence="15 16 17" key="14">
    <citation type="journal article" date="2015" name="J. Biol. Chem.">
        <title>Insights into ubiquitination from the unique clamp-like binding of the RING E3 AO7 to the E2 UbcH5B.</title>
        <authorList>
            <person name="Li S."/>
            <person name="Liang Y.H."/>
            <person name="Mariano J."/>
            <person name="Metzger M.B."/>
            <person name="Stringer D.K."/>
            <person name="Hristova V.A."/>
            <person name="Li J."/>
            <person name="Randazzo P.A."/>
            <person name="Tsai Y.C."/>
            <person name="Ji X."/>
            <person name="Weissman A.M."/>
        </authorList>
    </citation>
    <scope>X-RAY CRYSTALLOGRAPHY (1.58 ANGSTROMS) OF 126-258 IN COMPLEX WITH ZN(2+) AND UBE2D2</scope>
    <scope>CATALYTIC ACTIVITY</scope>
    <scope>PATHWAY</scope>
    <scope>INTERACTION WITH UBE2D2</scope>
    <scope>AUTOUBIQUITINATION</scope>
    <scope>MUTAGENESIS OF ILE-137; TYR-165; PRO-199; TYR-242 AND GLN-245</scope>
</reference>
<sequence>MAASASAAAGEEDWVLPSEVEVLESIYLDELQVIKGNGRTSPWEIYITLHPATAEDQDSQYVCFTLVLQVPAEYPHEVPQISIRNPRGLSDEQIHTILQVLGHVAKAGLGTAMLYELIEKGKEILTDNNIPHGQCVICLYGFQEKEAFTKTPCYHYFHCHCLARYIQHMEQELKAQGQEQEQERQHATTKQKAVGVQCPVCREPLVYDLASLKAAPEPQQPMELYQPSAESLRQQEERKRLYQRQQERGGIIDLEAERNRYFISLQQPPAPAEPESAVDVSKGSQPPSTLAAELSTSPAVQSTLPPPLPVATQHICEKIPGTRSNQQRLGETQKAMLDPPKPSRGPWRQPERRHPKGGECHAPKGTRDTQELPPPEGPLKEPMDLKPEPHSQGVEGPPQEKGPGSWQGPPPRRTRDCVRWERSKGRTPGSSYPRLPRGQGAYRPGTRRESLGLESKDGS</sequence>
<accession>Q96BH1</accession>
<accession>A8K0D6</accession>
<accession>Q53HQ5</accession>
<accession>Q9H874</accession>